<proteinExistence type="inferred from homology"/>
<evidence type="ECO:0000255" key="1">
    <source>
        <dbReference type="HAMAP-Rule" id="MF_00984"/>
    </source>
</evidence>
<evidence type="ECO:0000256" key="2">
    <source>
        <dbReference type="SAM" id="MobiDB-lite"/>
    </source>
</evidence>
<dbReference type="EMBL" id="AE016830">
    <property type="protein sequence ID" value="AAO79893.1"/>
    <property type="molecule type" value="Genomic_DNA"/>
</dbReference>
<dbReference type="RefSeq" id="NP_813821.1">
    <property type="nucleotide sequence ID" value="NC_004668.1"/>
</dbReference>
<dbReference type="RefSeq" id="WP_002379277.1">
    <property type="nucleotide sequence ID" value="NZ_KE136524.1"/>
</dbReference>
<dbReference type="SMR" id="Q839Y9"/>
<dbReference type="STRING" id="226185.EF_0008"/>
<dbReference type="EnsemblBacteria" id="AAO79893">
    <property type="protein sequence ID" value="AAO79893"/>
    <property type="gene ID" value="EF_0008"/>
</dbReference>
<dbReference type="KEGG" id="efa:EF0008"/>
<dbReference type="PATRIC" id="fig|226185.45.peg.246"/>
<dbReference type="eggNOG" id="COG0629">
    <property type="taxonomic scope" value="Bacteria"/>
</dbReference>
<dbReference type="HOGENOM" id="CLU_078758_6_2_9"/>
<dbReference type="Proteomes" id="UP000001415">
    <property type="component" value="Chromosome"/>
</dbReference>
<dbReference type="GO" id="GO:0009295">
    <property type="term" value="C:nucleoid"/>
    <property type="evidence" value="ECO:0007669"/>
    <property type="project" value="TreeGrafter"/>
</dbReference>
<dbReference type="GO" id="GO:0003697">
    <property type="term" value="F:single-stranded DNA binding"/>
    <property type="evidence" value="ECO:0007669"/>
    <property type="project" value="UniProtKB-UniRule"/>
</dbReference>
<dbReference type="GO" id="GO:0006310">
    <property type="term" value="P:DNA recombination"/>
    <property type="evidence" value="ECO:0007669"/>
    <property type="project" value="UniProtKB-UniRule"/>
</dbReference>
<dbReference type="GO" id="GO:0006281">
    <property type="term" value="P:DNA repair"/>
    <property type="evidence" value="ECO:0007669"/>
    <property type="project" value="UniProtKB-UniRule"/>
</dbReference>
<dbReference type="GO" id="GO:0006260">
    <property type="term" value="P:DNA replication"/>
    <property type="evidence" value="ECO:0007669"/>
    <property type="project" value="UniProtKB-UniRule"/>
</dbReference>
<dbReference type="CDD" id="cd04496">
    <property type="entry name" value="SSB_OBF"/>
    <property type="match status" value="1"/>
</dbReference>
<dbReference type="FunFam" id="2.40.50.140:FF:000084">
    <property type="entry name" value="Single-stranded DNA-binding protein"/>
    <property type="match status" value="1"/>
</dbReference>
<dbReference type="Gene3D" id="2.40.50.140">
    <property type="entry name" value="Nucleic acid-binding proteins"/>
    <property type="match status" value="1"/>
</dbReference>
<dbReference type="HAMAP" id="MF_00984">
    <property type="entry name" value="SSB"/>
    <property type="match status" value="1"/>
</dbReference>
<dbReference type="InterPro" id="IPR012340">
    <property type="entry name" value="NA-bd_OB-fold"/>
</dbReference>
<dbReference type="InterPro" id="IPR000424">
    <property type="entry name" value="Primosome_PriB/ssb"/>
</dbReference>
<dbReference type="InterPro" id="IPR011344">
    <property type="entry name" value="ssDNA-bd"/>
</dbReference>
<dbReference type="NCBIfam" id="TIGR00621">
    <property type="entry name" value="ssb"/>
    <property type="match status" value="1"/>
</dbReference>
<dbReference type="PANTHER" id="PTHR10302">
    <property type="entry name" value="SINGLE-STRANDED DNA-BINDING PROTEIN"/>
    <property type="match status" value="1"/>
</dbReference>
<dbReference type="PANTHER" id="PTHR10302:SF27">
    <property type="entry name" value="SINGLE-STRANDED DNA-BINDING PROTEIN"/>
    <property type="match status" value="1"/>
</dbReference>
<dbReference type="Pfam" id="PF00436">
    <property type="entry name" value="SSB"/>
    <property type="match status" value="1"/>
</dbReference>
<dbReference type="SUPFAM" id="SSF50249">
    <property type="entry name" value="Nucleic acid-binding proteins"/>
    <property type="match status" value="1"/>
</dbReference>
<dbReference type="PROSITE" id="PS50935">
    <property type="entry name" value="SSB"/>
    <property type="match status" value="1"/>
</dbReference>
<name>SSB_ENTFA</name>
<organism>
    <name type="scientific">Enterococcus faecalis (strain ATCC 700802 / V583)</name>
    <dbReference type="NCBI Taxonomy" id="226185"/>
    <lineage>
        <taxon>Bacteria</taxon>
        <taxon>Bacillati</taxon>
        <taxon>Bacillota</taxon>
        <taxon>Bacilli</taxon>
        <taxon>Lactobacillales</taxon>
        <taxon>Enterococcaceae</taxon>
        <taxon>Enterococcus</taxon>
    </lineage>
</organism>
<feature type="chain" id="PRO_0000096045" description="Single-stranded DNA-binding protein">
    <location>
        <begin position="1"/>
        <end position="188"/>
    </location>
</feature>
<feature type="domain" description="SSB" evidence="1">
    <location>
        <begin position="1"/>
        <end position="104"/>
    </location>
</feature>
<feature type="region of interest" description="Disordered" evidence="2">
    <location>
        <begin position="106"/>
        <end position="188"/>
    </location>
</feature>
<feature type="short sequence motif" description="Important for interaction with partner proteins" evidence="1">
    <location>
        <begin position="183"/>
        <end position="188"/>
    </location>
</feature>
<feature type="compositionally biased region" description="Polar residues" evidence="2">
    <location>
        <begin position="119"/>
        <end position="129"/>
    </location>
</feature>
<feature type="compositionally biased region" description="Low complexity" evidence="2">
    <location>
        <begin position="130"/>
        <end position="163"/>
    </location>
</feature>
<accession>Q839Y9</accession>
<gene>
    <name type="primary">ssb</name>
    <name type="ordered locus">EF_0008</name>
</gene>
<protein>
    <recommendedName>
        <fullName evidence="1">Single-stranded DNA-binding protein</fullName>
        <shortName evidence="1">SSB</shortName>
    </recommendedName>
</protein>
<reference key="1">
    <citation type="journal article" date="2003" name="Science">
        <title>Role of mobile DNA in the evolution of vancomycin-resistant Enterococcus faecalis.</title>
        <authorList>
            <person name="Paulsen I.T."/>
            <person name="Banerjei L."/>
            <person name="Myers G.S.A."/>
            <person name="Nelson K.E."/>
            <person name="Seshadri R."/>
            <person name="Read T.D."/>
            <person name="Fouts D.E."/>
            <person name="Eisen J.A."/>
            <person name="Gill S.R."/>
            <person name="Heidelberg J.F."/>
            <person name="Tettelin H."/>
            <person name="Dodson R.J."/>
            <person name="Umayam L.A."/>
            <person name="Brinkac L.M."/>
            <person name="Beanan M.J."/>
            <person name="Daugherty S.C."/>
            <person name="DeBoy R.T."/>
            <person name="Durkin S.A."/>
            <person name="Kolonay J.F."/>
            <person name="Madupu R."/>
            <person name="Nelson W.C."/>
            <person name="Vamathevan J.J."/>
            <person name="Tran B."/>
            <person name="Upton J."/>
            <person name="Hansen T."/>
            <person name="Shetty J."/>
            <person name="Khouri H.M."/>
            <person name="Utterback T.R."/>
            <person name="Radune D."/>
            <person name="Ketchum K.A."/>
            <person name="Dougherty B.A."/>
            <person name="Fraser C.M."/>
        </authorList>
    </citation>
    <scope>NUCLEOTIDE SEQUENCE [LARGE SCALE GENOMIC DNA]</scope>
    <source>
        <strain>ATCC 700802 / V583</strain>
    </source>
</reference>
<sequence length="188" mass="20604">MINNVVLVGRLTKDPDLRYTASGSAVATFTLAVNRNFTNQNGDREADFINCVIWRKPAETMANYARKGTLLGVVGRIQTRNYENQQGQRVYVTEVVCENFQLLESRSASEQRGTGGGSFNNNENGYQSQNRSFGNNNASSGFNNNNNSFNPSSSQSQNNNGMPDFDKDSDPFGGSGSSIDISDDDLPF</sequence>
<keyword id="KW-0227">DNA damage</keyword>
<keyword id="KW-0233">DNA recombination</keyword>
<keyword id="KW-0234">DNA repair</keyword>
<keyword id="KW-0235">DNA replication</keyword>
<keyword id="KW-0238">DNA-binding</keyword>
<keyword id="KW-1185">Reference proteome</keyword>
<comment type="function">
    <text evidence="1">Plays an important role in DNA replication, recombination and repair. Binds to ssDNA and to an array of partner proteins to recruit them to their sites of action during DNA metabolism.</text>
</comment>
<comment type="subunit">
    <text evidence="1">Homotetramer.</text>
</comment>